<proteinExistence type="evidence at protein level"/>
<name>NHAB_VIBAL</name>
<reference key="1">
    <citation type="journal article" date="1996" name="Biochim. Biophys. Acta">
        <title>Cloning and sequencing of nhaB gene encoding an Na+/H+ antiporter from Vibrio alginolyticus.</title>
        <authorList>
            <person name="Nakamura T."/>
            <person name="Enomoto H."/>
            <person name="Unemoto T."/>
        </authorList>
    </citation>
    <scope>NUCLEOTIDE SEQUENCE [GENOMIC DNA]</scope>
    <source>
        <strain>138-2</strain>
    </source>
</reference>
<reference key="2">
    <citation type="journal article" date="1998" name="Biochim. Biophys. Acta">
        <title>Topological study of Vibrio alginolyticus NhaB Na+/H+ antiporter using gene fusions in Escherichia coli cells.</title>
        <authorList>
            <person name="Enomoto H."/>
            <person name="Unemoto T."/>
            <person name="Nishibuchi M."/>
            <person name="Padan E."/>
            <person name="Nakamura T."/>
        </authorList>
    </citation>
    <scope>SUBCELLULAR LOCATION</scope>
    <scope>TOPOLOGY</scope>
</reference>
<reference key="3">
    <citation type="journal article" date="2001" name="J. Bacteriol.">
        <title>Residue aspartate-147 from the third transmembrane region of Na(+)/H(+) antiporter NhaB of Vibrio alginolyticus plays a role in its activity.</title>
        <authorList>
            <person name="Nakamura T."/>
            <person name="Fujisaki Y."/>
            <person name="Enomoto H."/>
            <person name="Nakayama Y."/>
            <person name="Takabe T."/>
            <person name="Yamaguchi N."/>
            <person name="Uozumi N."/>
        </authorList>
    </citation>
    <scope>FUNCTION</scope>
    <scope>MUTAGENESIS OF ASP-147</scope>
</reference>
<comment type="function">
    <text evidence="2 3">Na(+)/H(+) antiporter that extrudes sodium in exchange for external protons.</text>
</comment>
<comment type="catalytic activity">
    <reaction evidence="2">
        <text>2 Na(+)(in) + 3 H(+)(out) = 2 Na(+)(out) + 3 H(+)(in)</text>
        <dbReference type="Rhea" id="RHEA:29247"/>
        <dbReference type="ChEBI" id="CHEBI:15378"/>
        <dbReference type="ChEBI" id="CHEBI:29101"/>
    </reaction>
    <physiologicalReaction direction="left-to-right" evidence="2">
        <dbReference type="Rhea" id="RHEA:29248"/>
    </physiologicalReaction>
</comment>
<comment type="subcellular location">
    <subcellularLocation>
        <location evidence="4">Cell inner membrane</location>
        <topology evidence="4">Multi-pass membrane protein</topology>
    </subcellularLocation>
</comment>
<comment type="similarity">
    <text evidence="2 6">Belongs to the NhaB Na(+)/H(+) (TC 2.A.34) antiporter family.</text>
</comment>
<protein>
    <recommendedName>
        <fullName evidence="2 5">Na(+)/H(+) antiporter NhaB</fullName>
    </recommendedName>
    <alternativeName>
        <fullName evidence="2">Sodium/proton antiporter NhaB</fullName>
    </alternativeName>
</protein>
<gene>
    <name evidence="2 5" type="primary">nhaB</name>
</gene>
<sequence>MPISLGNAFIKNFLGKAPDWYKVAIIAFLIINPIVFFLINPFVAGWLLVAEFIFTLAMALKCYPLQPGGLLAIEAIAIGMTSPAQVKHELVANIEVLLLLVFMVAGIYFMKHLLLFIFTKILLGIRSKTLLSLAFCFAAAFLSAFLDALTVIAVVISVAIGFYSIYHKVASGNPIGDHDHTQDDTITELTRDDLENYRAFLRSLLMHAGVGTALGGVTTMVGEPQNLIIADQAGWLFGEFLIRMSPVTLPVFFCGLITCALVEKLKVFGYGAKLPNNVRQILVDFDNEERKTRTNQDVAKLWVQGLIAVWLIVALALHLAAVGLIGLSVIILATAFTGVIEEHSMGKAFEEALPFTALLAVFFSIVAVIIDQELFKPVIDAVLAVEDKGTQLALFYVANGLLSMVSDNVFVGTVYINEVKTALIEGLITREQFDLLAVAINTGTNLPSVATPNGQAAFLFLLTSALAPLIRLSYGRMVIMALPYTIVLAIVGLMGIMFFLEPATASFYDAGWILPHSGDLTPVVSGGH</sequence>
<organism>
    <name type="scientific">Vibrio alginolyticus</name>
    <dbReference type="NCBI Taxonomy" id="663"/>
    <lineage>
        <taxon>Bacteria</taxon>
        <taxon>Pseudomonadati</taxon>
        <taxon>Pseudomonadota</taxon>
        <taxon>Gammaproteobacteria</taxon>
        <taxon>Vibrionales</taxon>
        <taxon>Vibrionaceae</taxon>
        <taxon>Vibrio</taxon>
    </lineage>
</organism>
<dbReference type="EMBL" id="D83728">
    <property type="protein sequence ID" value="BAA12086.1"/>
    <property type="molecule type" value="Genomic_DNA"/>
</dbReference>
<dbReference type="SMR" id="Q56577"/>
<dbReference type="STRING" id="663.BAU10_09505"/>
<dbReference type="eggNOG" id="COG3067">
    <property type="taxonomic scope" value="Bacteria"/>
</dbReference>
<dbReference type="GO" id="GO:0005886">
    <property type="term" value="C:plasma membrane"/>
    <property type="evidence" value="ECO:0007669"/>
    <property type="project" value="UniProtKB-SubCell"/>
</dbReference>
<dbReference type="GO" id="GO:0015385">
    <property type="term" value="F:sodium:proton antiporter activity"/>
    <property type="evidence" value="ECO:0007669"/>
    <property type="project" value="InterPro"/>
</dbReference>
<dbReference type="HAMAP" id="MF_01599">
    <property type="entry name" value="NhaB"/>
    <property type="match status" value="1"/>
</dbReference>
<dbReference type="InterPro" id="IPR004671">
    <property type="entry name" value="Na+/H+_antiporter_NhaB"/>
</dbReference>
<dbReference type="NCBIfam" id="TIGR00774">
    <property type="entry name" value="NhaB"/>
    <property type="match status" value="1"/>
</dbReference>
<dbReference type="NCBIfam" id="NF007093">
    <property type="entry name" value="PRK09547.1"/>
    <property type="match status" value="1"/>
</dbReference>
<dbReference type="PANTHER" id="PTHR43302:SF1">
    <property type="entry name" value="NA(+)_H(+) ANTIPORTER NHAB"/>
    <property type="match status" value="1"/>
</dbReference>
<dbReference type="PANTHER" id="PTHR43302">
    <property type="entry name" value="TRANSPORTER ARSB-RELATED"/>
    <property type="match status" value="1"/>
</dbReference>
<dbReference type="Pfam" id="PF06450">
    <property type="entry name" value="NhaB"/>
    <property type="match status" value="1"/>
</dbReference>
<accession>Q56577</accession>
<evidence type="ECO:0000255" key="1"/>
<evidence type="ECO:0000255" key="2">
    <source>
        <dbReference type="HAMAP-Rule" id="MF_01599"/>
    </source>
</evidence>
<evidence type="ECO:0000269" key="3">
    <source>
    </source>
</evidence>
<evidence type="ECO:0000269" key="4">
    <source>
    </source>
</evidence>
<evidence type="ECO:0000303" key="5">
    <source>
    </source>
</evidence>
<evidence type="ECO:0000305" key="6"/>
<feature type="chain" id="PRO_0000333144" description="Na(+)/H(+) antiporter NhaB">
    <location>
        <begin position="1"/>
        <end position="528"/>
    </location>
</feature>
<feature type="topological domain" description="Cytoplasmic" evidence="4">
    <location>
        <begin position="1"/>
        <end position="23"/>
    </location>
</feature>
<feature type="transmembrane region" description="Helical" evidence="1">
    <location>
        <begin position="24"/>
        <end position="46"/>
    </location>
</feature>
<feature type="topological domain" description="Periplasmic" evidence="4">
    <location>
        <begin position="47"/>
        <end position="95"/>
    </location>
</feature>
<feature type="transmembrane region" description="Helical" evidence="1">
    <location>
        <begin position="96"/>
        <end position="118"/>
    </location>
</feature>
<feature type="topological domain" description="Cytoplasmic" evidence="4">
    <location>
        <begin position="119"/>
        <end position="129"/>
    </location>
</feature>
<feature type="transmembrane region" description="Helical" evidence="1">
    <location>
        <begin position="130"/>
        <end position="163"/>
    </location>
</feature>
<feature type="topological domain" description="Periplasmic" evidence="4">
    <location>
        <begin position="164"/>
        <end position="239"/>
    </location>
</feature>
<feature type="transmembrane region" description="Helical" evidence="1">
    <location>
        <begin position="240"/>
        <end position="262"/>
    </location>
</feature>
<feature type="topological domain" description="Cytoplasmic" evidence="4">
    <location>
        <begin position="263"/>
        <end position="297"/>
    </location>
</feature>
<feature type="transmembrane region" description="Helical" evidence="1">
    <location>
        <begin position="298"/>
        <end position="317"/>
    </location>
</feature>
<feature type="topological domain" description="Periplasmic" evidence="4">
    <location>
        <begin position="318"/>
        <end position="320"/>
    </location>
</feature>
<feature type="transmembrane region" description="Helical" evidence="1">
    <location>
        <begin position="321"/>
        <end position="340"/>
    </location>
</feature>
<feature type="topological domain" description="Cytoplasmic" evidence="4">
    <location>
        <begin position="341"/>
        <end position="352"/>
    </location>
</feature>
<feature type="transmembrane region" description="Helical" evidence="1">
    <location>
        <begin position="353"/>
        <end position="375"/>
    </location>
</feature>
<feature type="topological domain" description="Periplasmic" evidence="4">
    <location>
        <begin position="376"/>
        <end position="389"/>
    </location>
</feature>
<feature type="transmembrane region" description="Helical" evidence="1">
    <location>
        <begin position="390"/>
        <end position="412"/>
    </location>
</feature>
<feature type="topological domain" description="Cytoplasmic" evidence="4">
    <location>
        <begin position="413"/>
        <end position="477"/>
    </location>
</feature>
<feature type="transmembrane region" description="Helical" evidence="1">
    <location>
        <begin position="478"/>
        <end position="500"/>
    </location>
</feature>
<feature type="topological domain" description="Periplasmic" evidence="4">
    <location>
        <begin position="501"/>
        <end position="528"/>
    </location>
</feature>
<feature type="site" description="Important for antiport activity">
    <location>
        <position position="147"/>
    </location>
</feature>
<feature type="mutagenesis site" description="Loss of antiport activity at pH 8.5. No change in activity at pH 7.0." evidence="3">
    <original>D</original>
    <variation>E</variation>
    <location>
        <position position="147"/>
    </location>
</feature>
<feature type="mutagenesis site" description="Loss of antiport activity, both at pH 8.5 and at pH 7.0." evidence="3">
    <original>D</original>
    <variation>G</variation>
    <variation>M</variation>
    <variation>T</variation>
    <location>
        <position position="147"/>
    </location>
</feature>
<keyword id="KW-0050">Antiport</keyword>
<keyword id="KW-0997">Cell inner membrane</keyword>
<keyword id="KW-1003">Cell membrane</keyword>
<keyword id="KW-0406">Ion transport</keyword>
<keyword id="KW-0472">Membrane</keyword>
<keyword id="KW-0915">Sodium</keyword>
<keyword id="KW-0739">Sodium transport</keyword>
<keyword id="KW-0812">Transmembrane</keyword>
<keyword id="KW-1133">Transmembrane helix</keyword>
<keyword id="KW-0813">Transport</keyword>